<feature type="chain" id="PRO_0000060119" description="Probable transport system permease protein NifC">
    <location>
        <begin position="1"/>
        <end position="286"/>
    </location>
</feature>
<feature type="transmembrane region" description="Helical" evidence="1">
    <location>
        <begin position="34"/>
        <end position="54"/>
    </location>
</feature>
<feature type="transmembrane region" description="Helical" evidence="1">
    <location>
        <begin position="75"/>
        <end position="95"/>
    </location>
</feature>
<feature type="transmembrane region" description="Helical" evidence="1">
    <location>
        <begin position="114"/>
        <end position="134"/>
    </location>
</feature>
<feature type="transmembrane region" description="Helical" evidence="1">
    <location>
        <begin position="152"/>
        <end position="172"/>
    </location>
</feature>
<feature type="transmembrane region" description="Helical" evidence="1">
    <location>
        <begin position="216"/>
        <end position="236"/>
    </location>
</feature>
<feature type="transmembrane region" description="Helical" evidence="1">
    <location>
        <begin position="257"/>
        <end position="277"/>
    </location>
</feature>
<feature type="domain" description="ABC transmembrane type-1" evidence="1">
    <location>
        <begin position="75"/>
        <end position="278"/>
    </location>
</feature>
<evidence type="ECO:0000255" key="1">
    <source>
        <dbReference type="PROSITE-ProRule" id="PRU00441"/>
    </source>
</evidence>
<evidence type="ECO:0000305" key="2"/>
<name>NIFC_CLOPA</name>
<accession>P18795</accession>
<comment type="function">
    <text>May be involved in molybdenum transport.</text>
</comment>
<comment type="subcellular location">
    <subcellularLocation>
        <location evidence="2">Cell membrane</location>
        <topology evidence="1">Multi-pass membrane protein</topology>
    </subcellularLocation>
</comment>
<comment type="similarity">
    <text evidence="2">Belongs to the binding-protein-dependent transport system permease family. CysTW subfamily.</text>
</comment>
<proteinExistence type="inferred from homology"/>
<protein>
    <recommendedName>
        <fullName>Probable transport system permease protein NifC</fullName>
    </recommendedName>
</protein>
<reference key="1">
    <citation type="journal article" date="1990" name="Biochem. Biophys. Res. Commun.">
        <title>A nitrogen-fixation gene (nifC) in Clostridium pasteurianum with sequence similarity to chlJ of Escherichia coli.</title>
        <authorList>
            <person name="Wang S.-Z."/>
            <person name="Chen J.-S."/>
            <person name="Johnson J.L."/>
        </authorList>
    </citation>
    <scope>NUCLEOTIDE SEQUENCE [GENOMIC DNA]</scope>
    <source>
        <strain>ATCC 6013 / DSM 525 / NCIB 9486 / VKM B-1774 / W5</strain>
    </source>
</reference>
<organism>
    <name type="scientific">Clostridium pasteurianum</name>
    <dbReference type="NCBI Taxonomy" id="1501"/>
    <lineage>
        <taxon>Bacteria</taxon>
        <taxon>Bacillati</taxon>
        <taxon>Bacillota</taxon>
        <taxon>Clostridia</taxon>
        <taxon>Eubacteriales</taxon>
        <taxon>Clostridiaceae</taxon>
        <taxon>Clostridium</taxon>
    </lineage>
</organism>
<gene>
    <name type="primary">nifC</name>
</gene>
<keyword id="KW-1003">Cell membrane</keyword>
<keyword id="KW-0472">Membrane</keyword>
<keyword id="KW-0500">Molybdenum</keyword>
<keyword id="KW-0535">Nitrogen fixation</keyword>
<keyword id="KW-0812">Transmembrane</keyword>
<keyword id="KW-1133">Transmembrane helix</keyword>
<keyword id="KW-0813">Transport</keyword>
<dbReference type="EMBL" id="M34365">
    <property type="protein sequence ID" value="AAA23264.1"/>
    <property type="molecule type" value="Genomic_DNA"/>
</dbReference>
<dbReference type="PIR" id="A35608">
    <property type="entry name" value="A35608"/>
</dbReference>
<dbReference type="RefSeq" id="WP_003447860.1">
    <property type="nucleotide sequence ID" value="NZ_LFYL01000003.1"/>
</dbReference>
<dbReference type="SMR" id="P18795"/>
<dbReference type="OrthoDB" id="9795403at2"/>
<dbReference type="GO" id="GO:0005886">
    <property type="term" value="C:plasma membrane"/>
    <property type="evidence" value="ECO:0007669"/>
    <property type="project" value="UniProtKB-SubCell"/>
</dbReference>
<dbReference type="GO" id="GO:0015098">
    <property type="term" value="F:molybdate ion transmembrane transporter activity"/>
    <property type="evidence" value="ECO:0007669"/>
    <property type="project" value="InterPro"/>
</dbReference>
<dbReference type="GO" id="GO:0009399">
    <property type="term" value="P:nitrogen fixation"/>
    <property type="evidence" value="ECO:0007669"/>
    <property type="project" value="UniProtKB-KW"/>
</dbReference>
<dbReference type="CDD" id="cd06261">
    <property type="entry name" value="TM_PBP2"/>
    <property type="match status" value="1"/>
</dbReference>
<dbReference type="Gene3D" id="1.10.3720.10">
    <property type="entry name" value="MetI-like"/>
    <property type="match status" value="1"/>
</dbReference>
<dbReference type="InterPro" id="IPR000515">
    <property type="entry name" value="MetI-like"/>
</dbReference>
<dbReference type="InterPro" id="IPR035906">
    <property type="entry name" value="MetI-like_sf"/>
</dbReference>
<dbReference type="InterPro" id="IPR011867">
    <property type="entry name" value="ModB_ABC"/>
</dbReference>
<dbReference type="InterPro" id="IPR006469">
    <property type="entry name" value="NifC_ABC_porter"/>
</dbReference>
<dbReference type="NCBIfam" id="TIGR01581">
    <property type="entry name" value="Mo_ABC_porter"/>
    <property type="match status" value="1"/>
</dbReference>
<dbReference type="NCBIfam" id="TIGR02141">
    <property type="entry name" value="modB_ABC"/>
    <property type="match status" value="1"/>
</dbReference>
<dbReference type="PANTHER" id="PTHR30183">
    <property type="entry name" value="MOLYBDENUM TRANSPORT SYSTEM PERMEASE PROTEIN MODB"/>
    <property type="match status" value="1"/>
</dbReference>
<dbReference type="PANTHER" id="PTHR30183:SF3">
    <property type="entry name" value="MOLYBDENUM TRANSPORT SYSTEM PERMEASE PROTEIN MODB"/>
    <property type="match status" value="1"/>
</dbReference>
<dbReference type="Pfam" id="PF00528">
    <property type="entry name" value="BPD_transp_1"/>
    <property type="match status" value="1"/>
</dbReference>
<dbReference type="SUPFAM" id="SSF161098">
    <property type="entry name" value="MetI-like"/>
    <property type="match status" value="1"/>
</dbReference>
<dbReference type="PROSITE" id="PS50928">
    <property type="entry name" value="ABC_TM1"/>
    <property type="match status" value="1"/>
</dbReference>
<sequence length="286" mass="31683">MENNKKILESSKKLSSYGDGESRFSFLEKILAPLFLALTAIYFVMLIFPIISMIRYSGGSHIIQTLYDQDNIKTIILSFVTSLIALIFTFIIGTPTAFCINFVRNKVLSKILDIFVEIPVVLPPAVAGIALLLAFGKNGVVGNFLSNHGINVIFTSTAVIIAQFFVSSALYVRVLRDSVKSVPIELFEVSYVLGAGKIETIIKIMIPMLKKSIVSGLILAWIRSLGEFGATLMFAGNIIGKTRTIPLQIYTYMQDDIKMATAFATILYIMTFVLLLLVRLSIRDDD</sequence>